<comment type="function">
    <text>Catalyzes the transfer of the acyl moiety from in vitro synthesized 3-hydroxydecanoyl-CoA to acyl carrier protein.</text>
</comment>
<comment type="pathway">
    <text>Polyester biosynthesis; polyhydroxyalkanoate biosynthesis.</text>
</comment>
<protein>
    <recommendedName>
        <fullName>(R)-3-hydroxydecanoyl-ACP:CoA transacylase</fullName>
        <ecNumber>2.4.1.-</ecNumber>
    </recommendedName>
    <alternativeName>
        <fullName>3-hydroxyacyl-CoA-acyl carrier protein transferase</fullName>
    </alternativeName>
</protein>
<sequence length="295" mass="33914">MRPEIAVLDIQGQYRVYTEFYRADAAENTIILINGSLATTASFAQTVRNLHPQFNVVLFDQPYSGKSKPHNRQERLISKETEAHILLELIEHFQADHVMSFSWGGASTLLALAHQPRYVKKAVVSSFSPVINEPMRDYLDRGCQYLAACDRYQVGNLVNDTIGKHLPSLFKRFNYRHVSSLDSHEYAQMHFHINQVLEHDLERALQGARNINIPVLFINGERDEYTTVEDARQFSKHVGRSQFSVIRDAGHFLDMENKTACENTRNVMLGFLKPTVREPRQRYQPVQQGQHAFAI</sequence>
<name>PHAG_PSEPK</name>
<reference key="1">
    <citation type="journal article" date="1998" name="J. Biol. Chem.">
        <title>A new metabolic link between fatty acid de novo synthesis and polyhydroxyalkanoic acid synthesis. The phaG gene from Pseudomonas putida KT2440 encodes a 3-hydroxyacyl-acyl carrier protein-coenzyme A transferase.</title>
        <authorList>
            <person name="Rehm B.H.A."/>
            <person name="Kruger N."/>
            <person name="Steinbuchel A."/>
        </authorList>
    </citation>
    <scope>NUCLEOTIDE SEQUENCE [GENOMIC DNA]</scope>
</reference>
<reference key="2">
    <citation type="journal article" date="2002" name="Environ. Microbiol.">
        <title>Complete genome sequence and comparative analysis of the metabolically versatile Pseudomonas putida KT2440.</title>
        <authorList>
            <person name="Nelson K.E."/>
            <person name="Weinel C."/>
            <person name="Paulsen I.T."/>
            <person name="Dodson R.J."/>
            <person name="Hilbert H."/>
            <person name="Martins dos Santos V.A.P."/>
            <person name="Fouts D.E."/>
            <person name="Gill S.R."/>
            <person name="Pop M."/>
            <person name="Holmes M."/>
            <person name="Brinkac L.M."/>
            <person name="Beanan M.J."/>
            <person name="DeBoy R.T."/>
            <person name="Daugherty S.C."/>
            <person name="Kolonay J.F."/>
            <person name="Madupu R."/>
            <person name="Nelson W.C."/>
            <person name="White O."/>
            <person name="Peterson J.D."/>
            <person name="Khouri H.M."/>
            <person name="Hance I."/>
            <person name="Chris Lee P."/>
            <person name="Holtzapple E.K."/>
            <person name="Scanlan D."/>
            <person name="Tran K."/>
            <person name="Moazzez A."/>
            <person name="Utterback T.R."/>
            <person name="Rizzo M."/>
            <person name="Lee K."/>
            <person name="Kosack D."/>
            <person name="Moestl D."/>
            <person name="Wedler H."/>
            <person name="Lauber J."/>
            <person name="Stjepandic D."/>
            <person name="Hoheisel J."/>
            <person name="Straetz M."/>
            <person name="Heim S."/>
            <person name="Kiewitz C."/>
            <person name="Eisen J.A."/>
            <person name="Timmis K.N."/>
            <person name="Duesterhoeft A."/>
            <person name="Tuemmler B."/>
            <person name="Fraser C.M."/>
        </authorList>
    </citation>
    <scope>NUCLEOTIDE SEQUENCE [LARGE SCALE GENOMIC DNA]</scope>
    <source>
        <strain>ATCC 47054 / DSM 6125 / CFBP 8728 / NCIMB 11950 / KT2440</strain>
    </source>
</reference>
<gene>
    <name type="primary">phaG</name>
    <name type="ordered locus">PP_1408</name>
</gene>
<organism>
    <name type="scientific">Pseudomonas putida (strain ATCC 47054 / DSM 6125 / CFBP 8728 / NCIMB 11950 / KT2440)</name>
    <dbReference type="NCBI Taxonomy" id="160488"/>
    <lineage>
        <taxon>Bacteria</taxon>
        <taxon>Pseudomonadati</taxon>
        <taxon>Pseudomonadota</taxon>
        <taxon>Gammaproteobacteria</taxon>
        <taxon>Pseudomonadales</taxon>
        <taxon>Pseudomonadaceae</taxon>
        <taxon>Pseudomonas</taxon>
    </lineage>
</organism>
<accession>O85207</accession>
<dbReference type="EC" id="2.4.1.-"/>
<dbReference type="EMBL" id="AF052507">
    <property type="protein sequence ID" value="AAC34749.1"/>
    <property type="molecule type" value="Genomic_DNA"/>
</dbReference>
<dbReference type="EMBL" id="AE015451">
    <property type="protein sequence ID" value="AAN67031.1"/>
    <property type="molecule type" value="Genomic_DNA"/>
</dbReference>
<dbReference type="RefSeq" id="NP_743567.1">
    <property type="nucleotide sequence ID" value="NC_002947.4"/>
</dbReference>
<dbReference type="RefSeq" id="WP_010952516.1">
    <property type="nucleotide sequence ID" value="NZ_CP169744.1"/>
</dbReference>
<dbReference type="SMR" id="O85207"/>
<dbReference type="STRING" id="160488.PP_1408"/>
<dbReference type="ESTHER" id="psepu-PHAG">
    <property type="family name" value="HAA-synthase-thioesterase-RhlA-PhaG"/>
</dbReference>
<dbReference type="PaxDb" id="160488-PP_1408"/>
<dbReference type="GeneID" id="83682058"/>
<dbReference type="KEGG" id="ppu:PP_1408"/>
<dbReference type="PATRIC" id="fig|160488.4.peg.1493"/>
<dbReference type="eggNOG" id="COG2267">
    <property type="taxonomic scope" value="Bacteria"/>
</dbReference>
<dbReference type="HOGENOM" id="CLU_062012_0_0_6"/>
<dbReference type="OrthoDB" id="6984192at2"/>
<dbReference type="PhylomeDB" id="O85207"/>
<dbReference type="BioCyc" id="MetaCyc:G1G01-1499-MONOMER"/>
<dbReference type="BioCyc" id="PPUT160488:G1G01-1499-MONOMER"/>
<dbReference type="UniPathway" id="UPA00212"/>
<dbReference type="Proteomes" id="UP000000556">
    <property type="component" value="Chromosome"/>
</dbReference>
<dbReference type="GO" id="GO:0016740">
    <property type="term" value="F:transferase activity"/>
    <property type="evidence" value="ECO:0007669"/>
    <property type="project" value="UniProtKB-KW"/>
</dbReference>
<dbReference type="FunFam" id="3.40.50.1820:FF:000354">
    <property type="entry name" value="(R)-3-hydroxydecanoyl-ACP:CoA transacylase PhaG"/>
    <property type="match status" value="1"/>
</dbReference>
<dbReference type="Gene3D" id="3.40.50.1820">
    <property type="entry name" value="alpha/beta hydrolase"/>
    <property type="match status" value="1"/>
</dbReference>
<dbReference type="InterPro" id="IPR000073">
    <property type="entry name" value="AB_hydrolase_1"/>
</dbReference>
<dbReference type="InterPro" id="IPR029058">
    <property type="entry name" value="AB_hydrolase_fold"/>
</dbReference>
<dbReference type="InterPro" id="IPR050228">
    <property type="entry name" value="Carboxylesterase_BioH"/>
</dbReference>
<dbReference type="PANTHER" id="PTHR43194">
    <property type="entry name" value="HYDROLASE ALPHA/BETA FOLD FAMILY"/>
    <property type="match status" value="1"/>
</dbReference>
<dbReference type="PANTHER" id="PTHR43194:SF5">
    <property type="entry name" value="PIMELOYL-[ACYL-CARRIER PROTEIN] METHYL ESTER ESTERASE"/>
    <property type="match status" value="1"/>
</dbReference>
<dbReference type="Pfam" id="PF00561">
    <property type="entry name" value="Abhydrolase_1"/>
    <property type="match status" value="1"/>
</dbReference>
<dbReference type="SUPFAM" id="SSF53474">
    <property type="entry name" value="alpha/beta-Hydrolases"/>
    <property type="match status" value="1"/>
</dbReference>
<keyword id="KW-1185">Reference proteome</keyword>
<keyword id="KW-0808">Transferase</keyword>
<evidence type="ECO:0000255" key="1"/>
<feature type="chain" id="PRO_0000058372" description="(R)-3-hydroxydecanoyl-ACP:CoA transacylase">
    <location>
        <begin position="1"/>
        <end position="295"/>
    </location>
</feature>
<feature type="domain" description="AB hydrolase-1" evidence="1">
    <location>
        <begin position="28"/>
        <end position="254"/>
    </location>
</feature>
<proteinExistence type="predicted"/>